<feature type="chain" id="PRO_0000366790" description="Ribosomal RNA large subunit methyltransferase K/L">
    <location>
        <begin position="1"/>
        <end position="725"/>
    </location>
</feature>
<feature type="domain" description="THUMP" evidence="1">
    <location>
        <begin position="46"/>
        <end position="157"/>
    </location>
</feature>
<gene>
    <name evidence="1" type="primary">rlmL</name>
    <name type="ordered locus">Pmen_3009</name>
</gene>
<proteinExistence type="inferred from homology"/>
<accession>A4XWP8</accession>
<reference key="1">
    <citation type="submission" date="2007-04" db="EMBL/GenBank/DDBJ databases">
        <title>Complete sequence of Pseudomonas mendocina ymp.</title>
        <authorList>
            <consortium name="US DOE Joint Genome Institute"/>
            <person name="Copeland A."/>
            <person name="Lucas S."/>
            <person name="Lapidus A."/>
            <person name="Barry K."/>
            <person name="Glavina del Rio T."/>
            <person name="Dalin E."/>
            <person name="Tice H."/>
            <person name="Pitluck S."/>
            <person name="Kiss H."/>
            <person name="Brettin T."/>
            <person name="Detter J.C."/>
            <person name="Bruce D."/>
            <person name="Han C."/>
            <person name="Schmutz J."/>
            <person name="Larimer F."/>
            <person name="Land M."/>
            <person name="Hauser L."/>
            <person name="Kyrpides N."/>
            <person name="Mikhailova N."/>
            <person name="Hersman L."/>
            <person name="Dubois J."/>
            <person name="Maurice P."/>
            <person name="Richardson P."/>
        </authorList>
    </citation>
    <scope>NUCLEOTIDE SEQUENCE [LARGE SCALE GENOMIC DNA]</scope>
    <source>
        <strain>ymp</strain>
    </source>
</reference>
<dbReference type="EC" id="2.1.1.173" evidence="1"/>
<dbReference type="EC" id="2.1.1.264" evidence="1"/>
<dbReference type="EMBL" id="CP000680">
    <property type="protein sequence ID" value="ABP85764.1"/>
    <property type="molecule type" value="Genomic_DNA"/>
</dbReference>
<dbReference type="SMR" id="A4XWP8"/>
<dbReference type="STRING" id="399739.Pmen_3009"/>
<dbReference type="KEGG" id="pmy:Pmen_3009"/>
<dbReference type="PATRIC" id="fig|399739.8.peg.3054"/>
<dbReference type="eggNOG" id="COG0116">
    <property type="taxonomic scope" value="Bacteria"/>
</dbReference>
<dbReference type="eggNOG" id="COG1092">
    <property type="taxonomic scope" value="Bacteria"/>
</dbReference>
<dbReference type="HOGENOM" id="CLU_014042_2_0_6"/>
<dbReference type="OrthoDB" id="9809404at2"/>
<dbReference type="GO" id="GO:0005737">
    <property type="term" value="C:cytoplasm"/>
    <property type="evidence" value="ECO:0007669"/>
    <property type="project" value="UniProtKB-SubCell"/>
</dbReference>
<dbReference type="GO" id="GO:0052915">
    <property type="term" value="F:23S rRNA (guanine(2445)-N(2))-methyltransferase activity"/>
    <property type="evidence" value="ECO:0007669"/>
    <property type="project" value="UniProtKB-UniRule"/>
</dbReference>
<dbReference type="GO" id="GO:0003723">
    <property type="term" value="F:RNA binding"/>
    <property type="evidence" value="ECO:0007669"/>
    <property type="project" value="UniProtKB-KW"/>
</dbReference>
<dbReference type="GO" id="GO:0070043">
    <property type="term" value="F:rRNA (guanine-N7-)-methyltransferase activity"/>
    <property type="evidence" value="ECO:0007669"/>
    <property type="project" value="UniProtKB-UniRule"/>
</dbReference>
<dbReference type="CDD" id="cd02440">
    <property type="entry name" value="AdoMet_MTases"/>
    <property type="match status" value="1"/>
</dbReference>
<dbReference type="CDD" id="cd11715">
    <property type="entry name" value="THUMP_AdoMetMT"/>
    <property type="match status" value="1"/>
</dbReference>
<dbReference type="Gene3D" id="3.30.2130.30">
    <property type="match status" value="1"/>
</dbReference>
<dbReference type="Gene3D" id="3.30.750.80">
    <property type="entry name" value="RNA methyltransferase domain (HRMD) like"/>
    <property type="match status" value="1"/>
</dbReference>
<dbReference type="Gene3D" id="3.40.50.150">
    <property type="entry name" value="Vaccinia Virus protein VP39"/>
    <property type="match status" value="2"/>
</dbReference>
<dbReference type="HAMAP" id="MF_01858">
    <property type="entry name" value="23SrRNA_methyltr_KL"/>
    <property type="match status" value="1"/>
</dbReference>
<dbReference type="InterPro" id="IPR017244">
    <property type="entry name" value="23SrRNA_methyltr_KL"/>
</dbReference>
<dbReference type="InterPro" id="IPR002052">
    <property type="entry name" value="DNA_methylase_N6_adenine_CS"/>
</dbReference>
<dbReference type="InterPro" id="IPR000241">
    <property type="entry name" value="RlmKL-like_Mtase"/>
</dbReference>
<dbReference type="InterPro" id="IPR054170">
    <property type="entry name" value="RlmL_1st"/>
</dbReference>
<dbReference type="InterPro" id="IPR019614">
    <property type="entry name" value="SAM-dep_methyl-trfase"/>
</dbReference>
<dbReference type="InterPro" id="IPR029063">
    <property type="entry name" value="SAM-dependent_MTases_sf"/>
</dbReference>
<dbReference type="InterPro" id="IPR004114">
    <property type="entry name" value="THUMP_dom"/>
</dbReference>
<dbReference type="NCBIfam" id="NF008748">
    <property type="entry name" value="PRK11783.1"/>
    <property type="match status" value="1"/>
</dbReference>
<dbReference type="PANTHER" id="PTHR47313">
    <property type="entry name" value="RIBOSOMAL RNA LARGE SUBUNIT METHYLTRANSFERASE K/L"/>
    <property type="match status" value="1"/>
</dbReference>
<dbReference type="PANTHER" id="PTHR47313:SF1">
    <property type="entry name" value="RIBOSOMAL RNA LARGE SUBUNIT METHYLTRANSFERASE K_L"/>
    <property type="match status" value="1"/>
</dbReference>
<dbReference type="Pfam" id="PF10672">
    <property type="entry name" value="Methyltrans_SAM"/>
    <property type="match status" value="1"/>
</dbReference>
<dbReference type="Pfam" id="PF22020">
    <property type="entry name" value="RlmL_1st"/>
    <property type="match status" value="1"/>
</dbReference>
<dbReference type="Pfam" id="PF02926">
    <property type="entry name" value="THUMP"/>
    <property type="match status" value="1"/>
</dbReference>
<dbReference type="Pfam" id="PF01170">
    <property type="entry name" value="UPF0020"/>
    <property type="match status" value="1"/>
</dbReference>
<dbReference type="PIRSF" id="PIRSF037618">
    <property type="entry name" value="RNA_Mtase_bacteria_prd"/>
    <property type="match status" value="1"/>
</dbReference>
<dbReference type="SMART" id="SM00981">
    <property type="entry name" value="THUMP"/>
    <property type="match status" value="1"/>
</dbReference>
<dbReference type="SUPFAM" id="SSF53335">
    <property type="entry name" value="S-adenosyl-L-methionine-dependent methyltransferases"/>
    <property type="match status" value="2"/>
</dbReference>
<dbReference type="PROSITE" id="PS51165">
    <property type="entry name" value="THUMP"/>
    <property type="match status" value="1"/>
</dbReference>
<keyword id="KW-0963">Cytoplasm</keyword>
<keyword id="KW-0489">Methyltransferase</keyword>
<keyword id="KW-0694">RNA-binding</keyword>
<keyword id="KW-0698">rRNA processing</keyword>
<keyword id="KW-0949">S-adenosyl-L-methionine</keyword>
<keyword id="KW-0808">Transferase</keyword>
<sequence>MSDRYEIVLTCPKGLEGLLLEEARALGLEEAREQTAAVRGQAELEVAYRLCLWSRLANRVLLVLSRFSMNNAEELYEGVKAVDWRDHLEPAGSLAVEFSGHGSGIDNSHFGALKVKDAIVDRLRTAGGERPSIDKINPDLRVHLRLDRGEAVLSLDLSGHSLHQRGYRLQQGAAPLKENLAAAVLIRAGWPRIAAEGGALADPMCGVGTFLIEAALMAADVAPNLKRERWGFSNWLGHVPAIWKKLHAEAEQRAAAGLARPPLWIRGYEADPRLIQPGRNNVERAGLSDWVKIYQGELGSFEPRPDQNQKGLVISNPPYGERLGDEASLLYLYQNLGERLRQACLGWEAAVFTGAPELGKRMGLRSHKQYSFWNGALACKLLLIKVQTEQFVTGERRTRTEDEPVAEASSQARLSEGGQMFANRLQKNLKQLGKWARREGVECYRLYDADMPEYALAVDLYRDWVHVQEYAAPRSVDPDKAQARLLDALAAIPQALGVAQSRVAIKRRERQTGTKQYQRQAAQGQFMEVSEGGVKLLVNLTDYLDTGLFLDHRPLRLRIQREAAGKRFLNLFCYTATATVHAAKGGARSTTSVDLSKTYLDWARRNLSLNGFSDKHRLEQGDVMAWLAEDRGEYDLIFIDPPTFSNSKRMEGVFDVQRDHVELLDLAMARLAGGGVLYFSNNFRKFQLDESLVARYQVEEISAQTLDPDFARNPKIHRAWRFTAR</sequence>
<evidence type="ECO:0000255" key="1">
    <source>
        <dbReference type="HAMAP-Rule" id="MF_01858"/>
    </source>
</evidence>
<protein>
    <recommendedName>
        <fullName evidence="1">Ribosomal RNA large subunit methyltransferase K/L</fullName>
    </recommendedName>
    <domain>
        <recommendedName>
            <fullName evidence="1">23S rRNA m2G2445 methyltransferase</fullName>
            <ecNumber evidence="1">2.1.1.173</ecNumber>
        </recommendedName>
        <alternativeName>
            <fullName evidence="1">rRNA (guanine-N(2)-)-methyltransferase RlmL</fullName>
        </alternativeName>
    </domain>
    <domain>
        <recommendedName>
            <fullName evidence="1">23S rRNA m7G2069 methyltransferase</fullName>
            <ecNumber evidence="1">2.1.1.264</ecNumber>
        </recommendedName>
        <alternativeName>
            <fullName evidence="1">rRNA (guanine-N(7)-)-methyltransferase RlmK</fullName>
        </alternativeName>
    </domain>
</protein>
<name>RLMKL_ECTM1</name>
<organism>
    <name type="scientific">Ectopseudomonas mendocina (strain ymp)</name>
    <name type="common">Pseudomonas mendocina</name>
    <dbReference type="NCBI Taxonomy" id="399739"/>
    <lineage>
        <taxon>Bacteria</taxon>
        <taxon>Pseudomonadati</taxon>
        <taxon>Pseudomonadota</taxon>
        <taxon>Gammaproteobacteria</taxon>
        <taxon>Pseudomonadales</taxon>
        <taxon>Pseudomonadaceae</taxon>
        <taxon>Ectopseudomonas</taxon>
    </lineage>
</organism>
<comment type="function">
    <text evidence="1">Specifically methylates the guanine in position 2445 (m2G2445) and the guanine in position 2069 (m7G2069) of 23S rRNA.</text>
</comment>
<comment type="catalytic activity">
    <reaction evidence="1">
        <text>guanosine(2445) in 23S rRNA + S-adenosyl-L-methionine = N(2)-methylguanosine(2445) in 23S rRNA + S-adenosyl-L-homocysteine + H(+)</text>
        <dbReference type="Rhea" id="RHEA:42740"/>
        <dbReference type="Rhea" id="RHEA-COMP:10215"/>
        <dbReference type="Rhea" id="RHEA-COMP:10216"/>
        <dbReference type="ChEBI" id="CHEBI:15378"/>
        <dbReference type="ChEBI" id="CHEBI:57856"/>
        <dbReference type="ChEBI" id="CHEBI:59789"/>
        <dbReference type="ChEBI" id="CHEBI:74269"/>
        <dbReference type="ChEBI" id="CHEBI:74481"/>
        <dbReference type="EC" id="2.1.1.173"/>
    </reaction>
</comment>
<comment type="catalytic activity">
    <reaction evidence="1">
        <text>guanosine(2069) in 23S rRNA + S-adenosyl-L-methionine = N(2)-methylguanosine(2069) in 23S rRNA + S-adenosyl-L-homocysteine + H(+)</text>
        <dbReference type="Rhea" id="RHEA:43772"/>
        <dbReference type="Rhea" id="RHEA-COMP:10688"/>
        <dbReference type="Rhea" id="RHEA-COMP:10689"/>
        <dbReference type="ChEBI" id="CHEBI:15378"/>
        <dbReference type="ChEBI" id="CHEBI:57856"/>
        <dbReference type="ChEBI" id="CHEBI:59789"/>
        <dbReference type="ChEBI" id="CHEBI:74269"/>
        <dbReference type="ChEBI" id="CHEBI:74481"/>
        <dbReference type="EC" id="2.1.1.264"/>
    </reaction>
</comment>
<comment type="subcellular location">
    <subcellularLocation>
        <location evidence="1">Cytoplasm</location>
    </subcellularLocation>
</comment>
<comment type="similarity">
    <text evidence="1">Belongs to the methyltransferase superfamily. RlmKL family.</text>
</comment>